<sequence length="343" mass="38621">MASNSSNGTTTTKPPPMPSPLRNSKFFQSNMRILVTGGAGFIGSHLVDKLMQNEKNEVIVADNYFTGSKDNLKKWIGHPRFELIRHDVTEPLFVEVDQIYHLACPASPIFYKYNPVKTIKTNVIGTLNMLGLAKRVGARILLTSTSEVYGDPLVHPQTESYWGNVNPIGVRSCYDEGKRVAETLMFDYHRQHGIEIRIARIFNTYGPRMNIDDGRVVSNFIAQALRGEALTVQKPGTQTRSFCYVSDMVEGLMRLMEGDQTGPINIGNPGEFTMVELAETVKELIKPDVEIKMVENTPDDPRQRKPDISKAKEVLGWEPKVKLREGLPLMEEDFRLRLGVPKK</sequence>
<protein>
    <recommendedName>
        <fullName>UDP-glucuronic acid decarboxylase 6</fullName>
        <ecNumber>4.1.1.35</ecNumber>
    </recommendedName>
    <alternativeName>
        <fullName>UDP-XYL synthase 6</fullName>
    </alternativeName>
    <alternativeName>
        <fullName>UDP-glucuronate decarboxylase 6</fullName>
        <shortName>UGD</shortName>
        <shortName>UXS-6</shortName>
    </alternativeName>
</protein>
<evidence type="ECO:0000250" key="1"/>
<evidence type="ECO:0000250" key="2">
    <source>
        <dbReference type="UniProtKB" id="Q9LZI2"/>
    </source>
</evidence>
<evidence type="ECO:0000256" key="3">
    <source>
        <dbReference type="SAM" id="MobiDB-lite"/>
    </source>
</evidence>
<evidence type="ECO:0000305" key="4"/>
<keyword id="KW-0007">Acetylation</keyword>
<keyword id="KW-0963">Cytoplasm</keyword>
<keyword id="KW-0210">Decarboxylase</keyword>
<keyword id="KW-0456">Lyase</keyword>
<keyword id="KW-0520">NAD</keyword>
<keyword id="KW-1185">Reference proteome</keyword>
<name>UXS6_ARATH</name>
<dbReference type="EC" id="4.1.1.35"/>
<dbReference type="EMBL" id="AC005727">
    <property type="protein sequence ID" value="AAC79582.1"/>
    <property type="molecule type" value="Genomic_DNA"/>
</dbReference>
<dbReference type="EMBL" id="CP002685">
    <property type="protein sequence ID" value="AEC08167.1"/>
    <property type="molecule type" value="Genomic_DNA"/>
</dbReference>
<dbReference type="EMBL" id="CP002685">
    <property type="protein sequence ID" value="AEC08168.1"/>
    <property type="molecule type" value="Genomic_DNA"/>
</dbReference>
<dbReference type="EMBL" id="CP002685">
    <property type="protein sequence ID" value="AEC08169.1"/>
    <property type="molecule type" value="Genomic_DNA"/>
</dbReference>
<dbReference type="EMBL" id="AY099703">
    <property type="protein sequence ID" value="AAM20554.1"/>
    <property type="molecule type" value="mRNA"/>
</dbReference>
<dbReference type="EMBL" id="AY128899">
    <property type="protein sequence ID" value="AAM91299.1"/>
    <property type="molecule type" value="mRNA"/>
</dbReference>
<dbReference type="PIR" id="F84688">
    <property type="entry name" value="F84688"/>
</dbReference>
<dbReference type="RefSeq" id="NP_001077972.1">
    <property type="nucleotide sequence ID" value="NM_001084503.2"/>
</dbReference>
<dbReference type="RefSeq" id="NP_180443.1">
    <property type="nucleotide sequence ID" value="NM_128436.5"/>
</dbReference>
<dbReference type="RefSeq" id="NP_973555.1">
    <property type="nucleotide sequence ID" value="NM_201826.3"/>
</dbReference>
<dbReference type="SMR" id="Q9ZV36"/>
<dbReference type="BioGRID" id="2776">
    <property type="interactions" value="1"/>
</dbReference>
<dbReference type="FunCoup" id="Q9ZV36">
    <property type="interactions" value="2955"/>
</dbReference>
<dbReference type="STRING" id="3702.Q9ZV36"/>
<dbReference type="MetOSite" id="Q9ZV36"/>
<dbReference type="PaxDb" id="3702-AT2G28760.1"/>
<dbReference type="ProteomicsDB" id="228540"/>
<dbReference type="EnsemblPlants" id="AT2G28760.1">
    <property type="protein sequence ID" value="AT2G28760.1"/>
    <property type="gene ID" value="AT2G28760"/>
</dbReference>
<dbReference type="EnsemblPlants" id="AT2G28760.2">
    <property type="protein sequence ID" value="AT2G28760.2"/>
    <property type="gene ID" value="AT2G28760"/>
</dbReference>
<dbReference type="EnsemblPlants" id="AT2G28760.3">
    <property type="protein sequence ID" value="AT2G28760.3"/>
    <property type="gene ID" value="AT2G28760"/>
</dbReference>
<dbReference type="GeneID" id="817426"/>
<dbReference type="Gramene" id="AT2G28760.1">
    <property type="protein sequence ID" value="AT2G28760.1"/>
    <property type="gene ID" value="AT2G28760"/>
</dbReference>
<dbReference type="Gramene" id="AT2G28760.2">
    <property type="protein sequence ID" value="AT2G28760.2"/>
    <property type="gene ID" value="AT2G28760"/>
</dbReference>
<dbReference type="Gramene" id="AT2G28760.3">
    <property type="protein sequence ID" value="AT2G28760.3"/>
    <property type="gene ID" value="AT2G28760"/>
</dbReference>
<dbReference type="KEGG" id="ath:AT2G28760"/>
<dbReference type="Araport" id="AT2G28760"/>
<dbReference type="TAIR" id="AT2G28760">
    <property type="gene designation" value="UXS6"/>
</dbReference>
<dbReference type="eggNOG" id="KOG1429">
    <property type="taxonomic scope" value="Eukaryota"/>
</dbReference>
<dbReference type="HOGENOM" id="CLU_007383_4_0_1"/>
<dbReference type="InParanoid" id="Q9ZV36"/>
<dbReference type="OrthoDB" id="331544at2759"/>
<dbReference type="PhylomeDB" id="Q9ZV36"/>
<dbReference type="BRENDA" id="4.1.1.35">
    <property type="organism ID" value="399"/>
</dbReference>
<dbReference type="UniPathway" id="UPA00796">
    <property type="reaction ID" value="UER00771"/>
</dbReference>
<dbReference type="PRO" id="PR:Q9ZV36"/>
<dbReference type="Proteomes" id="UP000006548">
    <property type="component" value="Chromosome 2"/>
</dbReference>
<dbReference type="ExpressionAtlas" id="Q9ZV36">
    <property type="expression patterns" value="baseline and differential"/>
</dbReference>
<dbReference type="GO" id="GO:0005737">
    <property type="term" value="C:cytoplasm"/>
    <property type="evidence" value="ECO:0000314"/>
    <property type="project" value="TAIR"/>
</dbReference>
<dbReference type="GO" id="GO:0005777">
    <property type="term" value="C:peroxisome"/>
    <property type="evidence" value="ECO:0007005"/>
    <property type="project" value="TAIR"/>
</dbReference>
<dbReference type="GO" id="GO:0005886">
    <property type="term" value="C:plasma membrane"/>
    <property type="evidence" value="ECO:0007005"/>
    <property type="project" value="TAIR"/>
</dbReference>
<dbReference type="GO" id="GO:0070403">
    <property type="term" value="F:NAD+ binding"/>
    <property type="evidence" value="ECO:0007669"/>
    <property type="project" value="InterPro"/>
</dbReference>
<dbReference type="GO" id="GO:0048040">
    <property type="term" value="F:UDP-glucuronate decarboxylase activity"/>
    <property type="evidence" value="ECO:0000314"/>
    <property type="project" value="TAIR"/>
</dbReference>
<dbReference type="GO" id="GO:0042732">
    <property type="term" value="P:D-xylose metabolic process"/>
    <property type="evidence" value="ECO:0007669"/>
    <property type="project" value="InterPro"/>
</dbReference>
<dbReference type="GO" id="GO:0033320">
    <property type="term" value="P:UDP-D-xylose biosynthetic process"/>
    <property type="evidence" value="ECO:0007669"/>
    <property type="project" value="UniProtKB-UniPathway"/>
</dbReference>
<dbReference type="CDD" id="cd05230">
    <property type="entry name" value="UGD_SDR_e"/>
    <property type="match status" value="1"/>
</dbReference>
<dbReference type="FunFam" id="3.40.50.720:FF:000150">
    <property type="entry name" value="UDP-glucuronic acid decarboxylase 6"/>
    <property type="match status" value="1"/>
</dbReference>
<dbReference type="Gene3D" id="3.40.50.720">
    <property type="entry name" value="NAD(P)-binding Rossmann-like Domain"/>
    <property type="match status" value="2"/>
</dbReference>
<dbReference type="InterPro" id="IPR016040">
    <property type="entry name" value="NAD(P)-bd_dom"/>
</dbReference>
<dbReference type="InterPro" id="IPR036291">
    <property type="entry name" value="NAD(P)-bd_dom_sf"/>
</dbReference>
<dbReference type="InterPro" id="IPR044516">
    <property type="entry name" value="UXS-like"/>
</dbReference>
<dbReference type="PANTHER" id="PTHR43078:SF45">
    <property type="entry name" value="UDP-GLUCURONIC ACID DECARBOXYLASE 6"/>
    <property type="match status" value="1"/>
</dbReference>
<dbReference type="PANTHER" id="PTHR43078">
    <property type="entry name" value="UDP-GLUCURONIC ACID DECARBOXYLASE-RELATED"/>
    <property type="match status" value="1"/>
</dbReference>
<dbReference type="Pfam" id="PF16363">
    <property type="entry name" value="GDP_Man_Dehyd"/>
    <property type="match status" value="1"/>
</dbReference>
<dbReference type="SUPFAM" id="SSF51735">
    <property type="entry name" value="NAD(P)-binding Rossmann-fold domains"/>
    <property type="match status" value="1"/>
</dbReference>
<feature type="initiator methionine" description="Removed" evidence="2">
    <location>
        <position position="1"/>
    </location>
</feature>
<feature type="chain" id="PRO_0000421987" description="UDP-glucuronic acid decarboxylase 6">
    <location>
        <begin position="2"/>
        <end position="343"/>
    </location>
</feature>
<feature type="region of interest" description="Disordered" evidence="3">
    <location>
        <begin position="1"/>
        <end position="22"/>
    </location>
</feature>
<feature type="active site" description="Proton acceptor" evidence="1">
    <location>
        <position position="174"/>
    </location>
</feature>
<feature type="binding site" evidence="1">
    <location>
        <begin position="62"/>
        <end position="87"/>
    </location>
    <ligand>
        <name>NAD(+)</name>
        <dbReference type="ChEBI" id="CHEBI:57540"/>
    </ligand>
</feature>
<feature type="binding site" evidence="1">
    <location>
        <position position="171"/>
    </location>
    <ligand>
        <name>substrate</name>
    </ligand>
</feature>
<feature type="binding site" evidence="1">
    <location>
        <begin position="174"/>
        <end position="178"/>
    </location>
    <ligand>
        <name>NAD(+)</name>
        <dbReference type="ChEBI" id="CHEBI:57540"/>
    </ligand>
</feature>
<feature type="binding site" evidence="1">
    <location>
        <position position="203"/>
    </location>
    <ligand>
        <name>substrate</name>
    </ligand>
</feature>
<feature type="binding site" evidence="1">
    <location>
        <position position="215"/>
    </location>
    <ligand>
        <name>NAD(+)</name>
        <dbReference type="ChEBI" id="CHEBI:57540"/>
    </ligand>
</feature>
<feature type="binding site" evidence="1">
    <location>
        <begin position="216"/>
        <end position="220"/>
    </location>
    <ligand>
        <name>substrate</name>
    </ligand>
</feature>
<feature type="binding site" evidence="1">
    <location>
        <begin position="233"/>
        <end position="240"/>
    </location>
    <ligand>
        <name>substrate</name>
    </ligand>
</feature>
<feature type="binding site" evidence="1">
    <location>
        <begin position="300"/>
        <end position="304"/>
    </location>
    <ligand>
        <name>substrate</name>
    </ligand>
</feature>
<feature type="modified residue" description="N-acetylalanine" evidence="2">
    <location>
        <position position="2"/>
    </location>
</feature>
<comment type="function">
    <text evidence="1">Catalyzes the NAD-dependent decarboxylation of UDP-glucuronic acid to UDP-xylose. Necessary for the biosynthesis of the core tetrasaccharide in glycosaminoglycan biosynthesis (By similarity).</text>
</comment>
<comment type="catalytic activity">
    <reaction>
        <text>UDP-alpha-D-glucuronate + H(+) = UDP-alpha-D-xylose + CO2</text>
        <dbReference type="Rhea" id="RHEA:23916"/>
        <dbReference type="ChEBI" id="CHEBI:15378"/>
        <dbReference type="ChEBI" id="CHEBI:16526"/>
        <dbReference type="ChEBI" id="CHEBI:57632"/>
        <dbReference type="ChEBI" id="CHEBI:58052"/>
        <dbReference type="EC" id="4.1.1.35"/>
    </reaction>
</comment>
<comment type="cofactor">
    <cofactor evidence="1">
        <name>NAD(+)</name>
        <dbReference type="ChEBI" id="CHEBI:57540"/>
    </cofactor>
</comment>
<comment type="pathway">
    <text>Nucleotide-sugar biosynthesis; UDP-alpha-D-xylose biosynthesis; UDP-alpha-D-xylose from UDP-alpha-D-glucuronate: step 1/1.</text>
</comment>
<comment type="subcellular location">
    <subcellularLocation>
        <location evidence="1">Cytoplasm</location>
    </subcellularLocation>
</comment>
<comment type="similarity">
    <text evidence="4">Belongs to the NAD(P)-dependent epimerase/dehydratase family. UDP-glucuronic acid decarboxylase subfamily.</text>
</comment>
<accession>Q9ZV36</accession>
<gene>
    <name type="primary">UXS6</name>
    <name type="ordered locus">At2g28760</name>
    <name type="ORF">F8N16.5</name>
</gene>
<proteinExistence type="evidence at transcript level"/>
<reference key="1">
    <citation type="journal article" date="1999" name="Nature">
        <title>Sequence and analysis of chromosome 2 of the plant Arabidopsis thaliana.</title>
        <authorList>
            <person name="Lin X."/>
            <person name="Kaul S."/>
            <person name="Rounsley S.D."/>
            <person name="Shea T.P."/>
            <person name="Benito M.-I."/>
            <person name="Town C.D."/>
            <person name="Fujii C.Y."/>
            <person name="Mason T.M."/>
            <person name="Bowman C.L."/>
            <person name="Barnstead M.E."/>
            <person name="Feldblyum T.V."/>
            <person name="Buell C.R."/>
            <person name="Ketchum K.A."/>
            <person name="Lee J.J."/>
            <person name="Ronning C.M."/>
            <person name="Koo H.L."/>
            <person name="Moffat K.S."/>
            <person name="Cronin L.A."/>
            <person name="Shen M."/>
            <person name="Pai G."/>
            <person name="Van Aken S."/>
            <person name="Umayam L."/>
            <person name="Tallon L.J."/>
            <person name="Gill J.E."/>
            <person name="Adams M.D."/>
            <person name="Carrera A.J."/>
            <person name="Creasy T.H."/>
            <person name="Goodman H.M."/>
            <person name="Somerville C.R."/>
            <person name="Copenhaver G.P."/>
            <person name="Preuss D."/>
            <person name="Nierman W.C."/>
            <person name="White O."/>
            <person name="Eisen J.A."/>
            <person name="Salzberg S.L."/>
            <person name="Fraser C.M."/>
            <person name="Venter J.C."/>
        </authorList>
    </citation>
    <scope>NUCLEOTIDE SEQUENCE [LARGE SCALE GENOMIC DNA]</scope>
    <source>
        <strain>cv. Columbia</strain>
    </source>
</reference>
<reference key="2">
    <citation type="journal article" date="2017" name="Plant J.">
        <title>Araport11: a complete reannotation of the Arabidopsis thaliana reference genome.</title>
        <authorList>
            <person name="Cheng C.Y."/>
            <person name="Krishnakumar V."/>
            <person name="Chan A.P."/>
            <person name="Thibaud-Nissen F."/>
            <person name="Schobel S."/>
            <person name="Town C.D."/>
        </authorList>
    </citation>
    <scope>GENOME REANNOTATION</scope>
    <source>
        <strain>cv. Columbia</strain>
    </source>
</reference>
<reference key="3">
    <citation type="journal article" date="2003" name="Science">
        <title>Empirical analysis of transcriptional activity in the Arabidopsis genome.</title>
        <authorList>
            <person name="Yamada K."/>
            <person name="Lim J."/>
            <person name="Dale J.M."/>
            <person name="Chen H."/>
            <person name="Shinn P."/>
            <person name="Palm C.J."/>
            <person name="Southwick A.M."/>
            <person name="Wu H.C."/>
            <person name="Kim C.J."/>
            <person name="Nguyen M."/>
            <person name="Pham P.K."/>
            <person name="Cheuk R.F."/>
            <person name="Karlin-Newmann G."/>
            <person name="Liu S.X."/>
            <person name="Lam B."/>
            <person name="Sakano H."/>
            <person name="Wu T."/>
            <person name="Yu G."/>
            <person name="Miranda M."/>
            <person name="Quach H.L."/>
            <person name="Tripp M."/>
            <person name="Chang C.H."/>
            <person name="Lee J.M."/>
            <person name="Toriumi M.J."/>
            <person name="Chan M.M."/>
            <person name="Tang C.C."/>
            <person name="Onodera C.S."/>
            <person name="Deng J.M."/>
            <person name="Akiyama K."/>
            <person name="Ansari Y."/>
            <person name="Arakawa T."/>
            <person name="Banh J."/>
            <person name="Banno F."/>
            <person name="Bowser L."/>
            <person name="Brooks S.Y."/>
            <person name="Carninci P."/>
            <person name="Chao Q."/>
            <person name="Choy N."/>
            <person name="Enju A."/>
            <person name="Goldsmith A.D."/>
            <person name="Gurjal M."/>
            <person name="Hansen N.F."/>
            <person name="Hayashizaki Y."/>
            <person name="Johnson-Hopson C."/>
            <person name="Hsuan V.W."/>
            <person name="Iida K."/>
            <person name="Karnes M."/>
            <person name="Khan S."/>
            <person name="Koesema E."/>
            <person name="Ishida J."/>
            <person name="Jiang P.X."/>
            <person name="Jones T."/>
            <person name="Kawai J."/>
            <person name="Kamiya A."/>
            <person name="Meyers C."/>
            <person name="Nakajima M."/>
            <person name="Narusaka M."/>
            <person name="Seki M."/>
            <person name="Sakurai T."/>
            <person name="Satou M."/>
            <person name="Tamse R."/>
            <person name="Vaysberg M."/>
            <person name="Wallender E.K."/>
            <person name="Wong C."/>
            <person name="Yamamura Y."/>
            <person name="Yuan S."/>
            <person name="Shinozaki K."/>
            <person name="Davis R.W."/>
            <person name="Theologis A."/>
            <person name="Ecker J.R."/>
        </authorList>
    </citation>
    <scope>NUCLEOTIDE SEQUENCE [LARGE SCALE MRNA]</scope>
    <source>
        <strain>cv. Columbia</strain>
    </source>
</reference>
<reference key="4">
    <citation type="journal article" date="2002" name="Plant Physiol.">
        <title>Biosynthesis of UDP-xylose. Cloning and characterization of a novel Arabidopsis gene family, UXS, encoding soluble and putative membrane-bound UDP-glucuronic acid decarboxylase isoforms.</title>
        <authorList>
            <person name="Harper A.D."/>
            <person name="Bar-Peled M."/>
        </authorList>
    </citation>
    <scope>GENE FAMILY</scope>
</reference>
<organism>
    <name type="scientific">Arabidopsis thaliana</name>
    <name type="common">Mouse-ear cress</name>
    <dbReference type="NCBI Taxonomy" id="3702"/>
    <lineage>
        <taxon>Eukaryota</taxon>
        <taxon>Viridiplantae</taxon>
        <taxon>Streptophyta</taxon>
        <taxon>Embryophyta</taxon>
        <taxon>Tracheophyta</taxon>
        <taxon>Spermatophyta</taxon>
        <taxon>Magnoliopsida</taxon>
        <taxon>eudicotyledons</taxon>
        <taxon>Gunneridae</taxon>
        <taxon>Pentapetalae</taxon>
        <taxon>rosids</taxon>
        <taxon>malvids</taxon>
        <taxon>Brassicales</taxon>
        <taxon>Brassicaceae</taxon>
        <taxon>Camelineae</taxon>
        <taxon>Arabidopsis</taxon>
    </lineage>
</organism>